<evidence type="ECO:0000250" key="1"/>
<evidence type="ECO:0000255" key="2"/>
<evidence type="ECO:0000255" key="3">
    <source>
        <dbReference type="PROSITE-ProRule" id="PRU00031"/>
    </source>
</evidence>
<evidence type="ECO:0000305" key="4"/>
<comment type="function">
    <text evidence="1">Serine protease inhibitor that inhibits trypsin.</text>
</comment>
<comment type="subcellular location">
    <subcellularLocation>
        <location evidence="1">Secreted</location>
    </subcellularLocation>
</comment>
<comment type="tissue specificity">
    <text>Expressed by the venom gland.</text>
</comment>
<comment type="similarity">
    <text evidence="4">Belongs to the venom Kunitz-type family.</text>
</comment>
<dbReference type="EMBL" id="AM411361">
    <property type="protein sequence ID" value="CAL69602.1"/>
    <property type="molecule type" value="mRNA"/>
</dbReference>
<dbReference type="SMR" id="A8Y7N4"/>
<dbReference type="GO" id="GO:0005576">
    <property type="term" value="C:extracellular region"/>
    <property type="evidence" value="ECO:0007669"/>
    <property type="project" value="UniProtKB-SubCell"/>
</dbReference>
<dbReference type="GO" id="GO:0004867">
    <property type="term" value="F:serine-type endopeptidase inhibitor activity"/>
    <property type="evidence" value="ECO:0007669"/>
    <property type="project" value="UniProtKB-KW"/>
</dbReference>
<dbReference type="FunFam" id="4.10.410.10:FF:000021">
    <property type="entry name" value="Serine protease inhibitor, putative"/>
    <property type="match status" value="1"/>
</dbReference>
<dbReference type="Gene3D" id="4.10.410.10">
    <property type="entry name" value="Pancreatic trypsin inhibitor Kunitz domain"/>
    <property type="match status" value="1"/>
</dbReference>
<dbReference type="InterPro" id="IPR002223">
    <property type="entry name" value="Kunitz_BPTI"/>
</dbReference>
<dbReference type="InterPro" id="IPR036880">
    <property type="entry name" value="Kunitz_BPTI_sf"/>
</dbReference>
<dbReference type="InterPro" id="IPR020901">
    <property type="entry name" value="Prtase_inh_Kunz-CS"/>
</dbReference>
<dbReference type="InterPro" id="IPR050098">
    <property type="entry name" value="TFPI/VKTCI-like"/>
</dbReference>
<dbReference type="PANTHER" id="PTHR10083">
    <property type="entry name" value="KUNITZ-TYPE PROTEASE INHIBITOR-RELATED"/>
    <property type="match status" value="1"/>
</dbReference>
<dbReference type="Pfam" id="PF00014">
    <property type="entry name" value="Kunitz_BPTI"/>
    <property type="match status" value="1"/>
</dbReference>
<dbReference type="PRINTS" id="PR00759">
    <property type="entry name" value="BASICPTASE"/>
</dbReference>
<dbReference type="SMART" id="SM00131">
    <property type="entry name" value="KU"/>
    <property type="match status" value="1"/>
</dbReference>
<dbReference type="SUPFAM" id="SSF57362">
    <property type="entry name" value="BPTI-like"/>
    <property type="match status" value="1"/>
</dbReference>
<dbReference type="PROSITE" id="PS00280">
    <property type="entry name" value="BPTI_KUNITZ_1"/>
    <property type="match status" value="1"/>
</dbReference>
<dbReference type="PROSITE" id="PS50279">
    <property type="entry name" value="BPTI_KUNITZ_2"/>
    <property type="match status" value="1"/>
</dbReference>
<keyword id="KW-0165">Cleavage on pair of basic residues</keyword>
<keyword id="KW-1015">Disulfide bond</keyword>
<keyword id="KW-0646">Protease inhibitor</keyword>
<keyword id="KW-0873">Pyrrolidone carboxylic acid</keyword>
<keyword id="KW-0964">Secreted</keyword>
<keyword id="KW-0722">Serine protease inhibitor</keyword>
<keyword id="KW-0732">Signal</keyword>
<proteinExistence type="evidence at transcript level"/>
<reference key="1">
    <citation type="submission" date="2006-11" db="EMBL/GenBank/DDBJ databases">
        <title>BPTI petides from Chinese Daboia russellii siamensis.</title>
        <authorList>
            <person name="Guo C."/>
            <person name="McClean S."/>
            <person name="Shaw C."/>
            <person name="Rao P."/>
            <person name="Ye M."/>
            <person name="Anthony John B."/>
        </authorList>
    </citation>
    <scope>NUCLEOTIDE SEQUENCE [MRNA]</scope>
    <source>
        <strain>China</strain>
        <tissue>Venom gland</tissue>
    </source>
</reference>
<accession>A8Y7N4</accession>
<feature type="signal peptide" evidence="1">
    <location>
        <begin position="1"/>
        <end position="24"/>
    </location>
</feature>
<feature type="chain" id="PRO_5000284427" description="Kunitz-type serine protease inhibitor C1">
    <location>
        <begin position="25"/>
        <end position="84"/>
    </location>
</feature>
<feature type="propeptide" id="PRO_0000377467" evidence="2">
    <location>
        <begin position="85"/>
        <end position="90"/>
    </location>
</feature>
<feature type="domain" description="BPTI/Kunitz inhibitor" evidence="3">
    <location>
        <begin position="31"/>
        <end position="81"/>
    </location>
</feature>
<feature type="site" description="Reactive bond for trypsin" evidence="1">
    <location>
        <begin position="41"/>
        <end position="42"/>
    </location>
</feature>
<feature type="modified residue" description="Pyrrolidone carboxylic acid" evidence="1">
    <location>
        <position position="25"/>
    </location>
</feature>
<feature type="disulfide bond" evidence="3">
    <location>
        <begin position="31"/>
        <end position="81"/>
    </location>
</feature>
<feature type="disulfide bond" evidence="3">
    <location>
        <begin position="40"/>
        <end position="64"/>
    </location>
</feature>
<feature type="disulfide bond" evidence="3">
    <location>
        <begin position="56"/>
        <end position="77"/>
    </location>
</feature>
<organism>
    <name type="scientific">Daboia siamensis</name>
    <name type="common">Eastern Russel's viper</name>
    <name type="synonym">Daboia russelii siamensis</name>
    <dbReference type="NCBI Taxonomy" id="343250"/>
    <lineage>
        <taxon>Eukaryota</taxon>
        <taxon>Metazoa</taxon>
        <taxon>Chordata</taxon>
        <taxon>Craniata</taxon>
        <taxon>Vertebrata</taxon>
        <taxon>Euteleostomi</taxon>
        <taxon>Lepidosauria</taxon>
        <taxon>Squamata</taxon>
        <taxon>Bifurcata</taxon>
        <taxon>Unidentata</taxon>
        <taxon>Episquamata</taxon>
        <taxon>Toxicofera</taxon>
        <taxon>Serpentes</taxon>
        <taxon>Colubroidea</taxon>
        <taxon>Viperidae</taxon>
        <taxon>Viperinae</taxon>
        <taxon>Daboia</taxon>
    </lineage>
</organism>
<protein>
    <recommendedName>
        <fullName>Kunitz-type serine protease inhibitor C1</fullName>
    </recommendedName>
    <alternativeName>
        <fullName>BPTI-1</fullName>
    </alternativeName>
    <alternativeName>
        <fullName>Trypsin inhibitor 1</fullName>
    </alternativeName>
    <alternativeName>
        <fullName>Trypsin inhibitor C1</fullName>
    </alternativeName>
</protein>
<name>VKTC1_DABSI</name>
<sequence length="90" mass="10010">MSSGGLLLLLGLLTLWAELTPISGQDRPKFCNLAPESGRCRGHLRRIYYNPDSNKCEVFFYGGCGGNDNNFETRKKCRQTCGAPRKGRPT</sequence>